<proteinExistence type="evidence at protein level"/>
<keyword id="KW-0002">3D-structure</keyword>
<keyword id="KW-0240">DNA-directed RNA polymerase</keyword>
<keyword id="KW-0548">Nucleotidyltransferase</keyword>
<keyword id="KW-0804">Transcription</keyword>
<keyword id="KW-0808">Transferase</keyword>
<protein>
    <recommendedName>
        <fullName>DNA-directed RNA polymerase subunit alpha</fullName>
        <shortName>RNAP subunit alpha</shortName>
        <ecNumber>2.7.7.6</ecNumber>
    </recommendedName>
    <alternativeName>
        <fullName>RNA polymerase subunit alpha</fullName>
    </alternativeName>
    <alternativeName>
        <fullName>Transcriptase subunit alpha</fullName>
    </alternativeName>
</protein>
<comment type="function">
    <text>DNA-dependent RNA polymerase catalyzes the transcription of DNA into RNA using the four ribonucleoside triphosphates as substrates.</text>
</comment>
<comment type="catalytic activity">
    <reaction>
        <text>RNA(n) + a ribonucleoside 5'-triphosphate = RNA(n+1) + diphosphate</text>
        <dbReference type="Rhea" id="RHEA:21248"/>
        <dbReference type="Rhea" id="RHEA-COMP:14527"/>
        <dbReference type="Rhea" id="RHEA-COMP:17342"/>
        <dbReference type="ChEBI" id="CHEBI:33019"/>
        <dbReference type="ChEBI" id="CHEBI:61557"/>
        <dbReference type="ChEBI" id="CHEBI:140395"/>
        <dbReference type="EC" id="2.7.7.6"/>
    </reaction>
</comment>
<comment type="subunit">
    <text>Homodimer. The RNAP catalytic core consists of 2 alpha, 1 beta, 1 beta' and 1 omega subunit. When a sigma factor is associated with the core the holoenzyme is formed, which can initiate transcription.</text>
</comment>
<comment type="domain">
    <text evidence="1">The N-terminal domain is essential for RNAP assembly and basal transcription, whereas the C-terminal domain is involved in interaction with transcriptional regulators and with upstream promoter elements.</text>
</comment>
<comment type="similarity">
    <text evidence="2">Belongs to the RNA polymerase alpha chain family.</text>
</comment>
<comment type="caution">
    <text evidence="2">The sequence shown here has been extracted from PDB entry 1IW7.</text>
</comment>
<feature type="chain" id="PRO_0000175409" description="DNA-directed RNA polymerase subunit alpha">
    <location>
        <begin position="1"/>
        <end position="315"/>
    </location>
</feature>
<feature type="region of interest" description="Alpha N-terminal domain (alpha-NTD)">
    <location>
        <begin position="1"/>
        <end position="229"/>
    </location>
</feature>
<feature type="region of interest" description="Alpha C-terminal domain (alpha-CTD)">
    <location>
        <begin position="247"/>
        <end position="315"/>
    </location>
</feature>
<feature type="strand" evidence="4">
    <location>
        <begin position="3"/>
        <end position="5"/>
    </location>
</feature>
<feature type="strand" evidence="4">
    <location>
        <begin position="10"/>
        <end position="16"/>
    </location>
</feature>
<feature type="turn" evidence="4">
    <location>
        <begin position="17"/>
        <end position="19"/>
    </location>
</feature>
<feature type="strand" evidence="4">
    <location>
        <begin position="20"/>
        <end position="28"/>
    </location>
</feature>
<feature type="helix" evidence="4">
    <location>
        <begin position="32"/>
        <end position="46"/>
    </location>
</feature>
<feature type="strand" evidence="4">
    <location>
        <begin position="48"/>
        <end position="60"/>
    </location>
</feature>
<feature type="strand" evidence="4">
    <location>
        <begin position="71"/>
        <end position="74"/>
    </location>
</feature>
<feature type="helix" evidence="4">
    <location>
        <begin position="75"/>
        <end position="83"/>
    </location>
</feature>
<feature type="strand" evidence="4">
    <location>
        <begin position="87"/>
        <end position="89"/>
    </location>
</feature>
<feature type="strand" evidence="4">
    <location>
        <begin position="95"/>
        <end position="106"/>
    </location>
</feature>
<feature type="strand" evidence="4">
    <location>
        <begin position="108"/>
        <end position="110"/>
    </location>
</feature>
<feature type="helix" evidence="4">
    <location>
        <begin position="111"/>
        <end position="113"/>
    </location>
</feature>
<feature type="strand" evidence="4">
    <location>
        <begin position="118"/>
        <end position="123"/>
    </location>
</feature>
<feature type="strand" evidence="4">
    <location>
        <begin position="128"/>
        <end position="132"/>
    </location>
</feature>
<feature type="strand" evidence="4">
    <location>
        <begin position="137"/>
        <end position="151"/>
    </location>
</feature>
<feature type="helix" evidence="4">
    <location>
        <begin position="153"/>
        <end position="156"/>
    </location>
</feature>
<feature type="strand" evidence="5">
    <location>
        <begin position="160"/>
        <end position="163"/>
    </location>
</feature>
<feature type="strand" evidence="4">
    <location>
        <begin position="173"/>
        <end position="181"/>
    </location>
</feature>
<feature type="strand" evidence="4">
    <location>
        <begin position="193"/>
        <end position="201"/>
    </location>
</feature>
<feature type="strand" evidence="4">
    <location>
        <begin position="203"/>
        <end position="205"/>
    </location>
</feature>
<feature type="helix" evidence="4">
    <location>
        <begin position="207"/>
        <end position="223"/>
    </location>
</feature>
<feature type="helix" evidence="3">
    <location>
        <begin position="256"/>
        <end position="259"/>
    </location>
</feature>
<feature type="helix" evidence="3">
    <location>
        <begin position="263"/>
        <end position="271"/>
    </location>
</feature>
<feature type="helix" evidence="3">
    <location>
        <begin position="277"/>
        <end position="282"/>
    </location>
</feature>
<feature type="helix" evidence="3">
    <location>
        <begin position="285"/>
        <end position="288"/>
    </location>
</feature>
<feature type="helix" evidence="3">
    <location>
        <begin position="296"/>
        <end position="309"/>
    </location>
</feature>
<accession>Q9Z9H6</accession>
<reference key="1">
    <citation type="journal article" date="2000" name="J. Biol. Chem.">
        <title>The structure and the characteristic DNA binding property of the C-terminal domain of the RNA polymerase alpha subunit from Thermus thermophilus.</title>
        <authorList>
            <person name="Wada T."/>
            <person name="Yamazaki T."/>
            <person name="Kyogoku Y."/>
        </authorList>
    </citation>
    <scope>STRUCTURE BY NMR OF 247-315</scope>
</reference>
<reference key="2">
    <citation type="journal article" date="2002" name="Nature">
        <title>Crystal structure of a bacterial RNA polymerase holoenzyme at 2.6 A resolution.</title>
        <authorList>
            <person name="Vassylyev D.G."/>
            <person name="Sekine S."/>
            <person name="Laptenko O."/>
            <person name="Lee J."/>
            <person name="Vassylyeva M.N."/>
            <person name="Borukhov S."/>
            <person name="Yokoyama S."/>
        </authorList>
    </citation>
    <scope>X-RAY CRYSTALLOGRAPHY (2.6 ANGSTROMS)</scope>
</reference>
<evidence type="ECO:0000250" key="1"/>
<evidence type="ECO:0000305" key="2"/>
<evidence type="ECO:0007829" key="3">
    <source>
        <dbReference type="PDB" id="1DOQ"/>
    </source>
</evidence>
<evidence type="ECO:0007829" key="4">
    <source>
        <dbReference type="PDB" id="1IW7"/>
    </source>
</evidence>
<evidence type="ECO:0007829" key="5">
    <source>
        <dbReference type="PDB" id="4Q5S"/>
    </source>
</evidence>
<organism>
    <name type="scientific">Thermus thermophilus</name>
    <dbReference type="NCBI Taxonomy" id="274"/>
    <lineage>
        <taxon>Bacteria</taxon>
        <taxon>Thermotogati</taxon>
        <taxon>Deinococcota</taxon>
        <taxon>Deinococci</taxon>
        <taxon>Thermales</taxon>
        <taxon>Thermaceae</taxon>
        <taxon>Thermus</taxon>
    </lineage>
</organism>
<dbReference type="EC" id="2.7.7.6"/>
<dbReference type="RefSeq" id="WP_011173698.1">
    <property type="nucleotide sequence ID" value="NZ_DFSU01000131.1"/>
</dbReference>
<dbReference type="PDB" id="1DOQ">
    <property type="method" value="NMR"/>
    <property type="chains" value="A=247-315"/>
</dbReference>
<dbReference type="PDB" id="1IW7">
    <property type="method" value="X-ray"/>
    <property type="resolution" value="2.60 A"/>
    <property type="chains" value="A/B/K/L=1-315"/>
</dbReference>
<dbReference type="PDB" id="1SMY">
    <property type="method" value="X-ray"/>
    <property type="resolution" value="2.70 A"/>
    <property type="chains" value="A/B/K/L=1-315"/>
</dbReference>
<dbReference type="PDB" id="2BE5">
    <property type="method" value="X-ray"/>
    <property type="resolution" value="2.40 A"/>
    <property type="chains" value="A/B/K/L=1-315"/>
</dbReference>
<dbReference type="PDB" id="2PPB">
    <property type="method" value="X-ray"/>
    <property type="resolution" value="3.00 A"/>
    <property type="chains" value="A/B/K/L=1-315"/>
</dbReference>
<dbReference type="PDB" id="3EQL">
    <property type="method" value="X-ray"/>
    <property type="resolution" value="2.70 A"/>
    <property type="chains" value="A/B/K/L=1-315"/>
</dbReference>
<dbReference type="PDB" id="4Q4Z">
    <property type="method" value="X-ray"/>
    <property type="resolution" value="2.90 A"/>
    <property type="chains" value="A/B=1-315"/>
</dbReference>
<dbReference type="PDB" id="4Q5S">
    <property type="method" value="X-ray"/>
    <property type="resolution" value="3.00 A"/>
    <property type="chains" value="A/B=1-315"/>
</dbReference>
<dbReference type="PDBsum" id="1DOQ"/>
<dbReference type="PDBsum" id="1IW7"/>
<dbReference type="PDBsum" id="1SMY"/>
<dbReference type="PDBsum" id="2BE5"/>
<dbReference type="PDBsum" id="2PPB"/>
<dbReference type="PDBsum" id="3EQL"/>
<dbReference type="PDBsum" id="4Q4Z"/>
<dbReference type="PDBsum" id="4Q5S"/>
<dbReference type="BMRB" id="Q9Z9H6"/>
<dbReference type="SMR" id="Q9Z9H6"/>
<dbReference type="DIP" id="DIP-60256N"/>
<dbReference type="IntAct" id="Q9Z9H6">
    <property type="interactions" value="3"/>
</dbReference>
<dbReference type="DrugBank" id="DB08226">
    <property type="generic name" value="Myxopyronin B"/>
</dbReference>
<dbReference type="OMA" id="PIKNVKY"/>
<dbReference type="EvolutionaryTrace" id="Q9Z9H6"/>
<dbReference type="GO" id="GO:0005737">
    <property type="term" value="C:cytoplasm"/>
    <property type="evidence" value="ECO:0007669"/>
    <property type="project" value="UniProtKB-ARBA"/>
</dbReference>
<dbReference type="GO" id="GO:0000428">
    <property type="term" value="C:DNA-directed RNA polymerase complex"/>
    <property type="evidence" value="ECO:0007669"/>
    <property type="project" value="UniProtKB-KW"/>
</dbReference>
<dbReference type="GO" id="GO:0003677">
    <property type="term" value="F:DNA binding"/>
    <property type="evidence" value="ECO:0007669"/>
    <property type="project" value="UniProtKB-UniRule"/>
</dbReference>
<dbReference type="GO" id="GO:0003899">
    <property type="term" value="F:DNA-directed RNA polymerase activity"/>
    <property type="evidence" value="ECO:0007669"/>
    <property type="project" value="UniProtKB-UniRule"/>
</dbReference>
<dbReference type="GO" id="GO:0046983">
    <property type="term" value="F:protein dimerization activity"/>
    <property type="evidence" value="ECO:0007669"/>
    <property type="project" value="InterPro"/>
</dbReference>
<dbReference type="GO" id="GO:0006351">
    <property type="term" value="P:DNA-templated transcription"/>
    <property type="evidence" value="ECO:0007669"/>
    <property type="project" value="UniProtKB-UniRule"/>
</dbReference>
<dbReference type="CDD" id="cd06928">
    <property type="entry name" value="RNAP_alpha_NTD"/>
    <property type="match status" value="1"/>
</dbReference>
<dbReference type="FunFam" id="2.170.120.12:FF:000001">
    <property type="entry name" value="DNA-directed RNA polymerase subunit alpha"/>
    <property type="match status" value="1"/>
</dbReference>
<dbReference type="Gene3D" id="1.10.150.20">
    <property type="entry name" value="5' to 3' exonuclease, C-terminal subdomain"/>
    <property type="match status" value="1"/>
</dbReference>
<dbReference type="Gene3D" id="2.170.120.12">
    <property type="entry name" value="DNA-directed RNA polymerase, insert domain"/>
    <property type="match status" value="1"/>
</dbReference>
<dbReference type="Gene3D" id="3.30.1360.10">
    <property type="entry name" value="RNA polymerase, RBP11-like subunit"/>
    <property type="match status" value="1"/>
</dbReference>
<dbReference type="HAMAP" id="MF_00059">
    <property type="entry name" value="RNApol_bact_RpoA"/>
    <property type="match status" value="1"/>
</dbReference>
<dbReference type="InterPro" id="IPR011262">
    <property type="entry name" value="DNA-dir_RNA_pol_insert"/>
</dbReference>
<dbReference type="InterPro" id="IPR011263">
    <property type="entry name" value="DNA-dir_RNA_pol_RpoA/D/Rpb3"/>
</dbReference>
<dbReference type="InterPro" id="IPR011773">
    <property type="entry name" value="DNA-dir_RpoA"/>
</dbReference>
<dbReference type="InterPro" id="IPR036603">
    <property type="entry name" value="RBP11-like"/>
</dbReference>
<dbReference type="InterPro" id="IPR011260">
    <property type="entry name" value="RNAP_asu_C"/>
</dbReference>
<dbReference type="InterPro" id="IPR036643">
    <property type="entry name" value="RNApol_insert_sf"/>
</dbReference>
<dbReference type="NCBIfam" id="NF003513">
    <property type="entry name" value="PRK05182.1-2"/>
    <property type="match status" value="1"/>
</dbReference>
<dbReference type="NCBIfam" id="NF003519">
    <property type="entry name" value="PRK05182.2-5"/>
    <property type="match status" value="1"/>
</dbReference>
<dbReference type="NCBIfam" id="TIGR02027">
    <property type="entry name" value="rpoA"/>
    <property type="match status" value="1"/>
</dbReference>
<dbReference type="Pfam" id="PF01000">
    <property type="entry name" value="RNA_pol_A_bac"/>
    <property type="match status" value="1"/>
</dbReference>
<dbReference type="Pfam" id="PF03118">
    <property type="entry name" value="RNA_pol_A_CTD"/>
    <property type="match status" value="1"/>
</dbReference>
<dbReference type="Pfam" id="PF01193">
    <property type="entry name" value="RNA_pol_L"/>
    <property type="match status" value="1"/>
</dbReference>
<dbReference type="SMART" id="SM00662">
    <property type="entry name" value="RPOLD"/>
    <property type="match status" value="1"/>
</dbReference>
<dbReference type="SUPFAM" id="SSF47789">
    <property type="entry name" value="C-terminal domain of RNA polymerase alpha subunit"/>
    <property type="match status" value="1"/>
</dbReference>
<dbReference type="SUPFAM" id="SSF56553">
    <property type="entry name" value="Insert subdomain of RNA polymerase alpha subunit"/>
    <property type="match status" value="1"/>
</dbReference>
<dbReference type="SUPFAM" id="SSF55257">
    <property type="entry name" value="RBP11-like subunits of RNA polymerase"/>
    <property type="match status" value="1"/>
</dbReference>
<sequence length="315" mass="35013">MLDSKLKAPVFTVRTQGREYGEFVLEPLERGFGVTLGNPLRRILLSSIPGTAVTSVYIEDVLHEFSTIPGVKEDVVEIILNLKELVVRFLNPSLQTVTLLLKAEGPKEVKARDFLPVADVEIMNPDLHIATLEEGGRLNMEVRVDRGVGYVPAEKHGIKDRINAIPVDAVFSPVRRVAFQVEDTRLGQRTDLDKLTLRIWTDGSVTPLEALNQAVEILREHLTYFSNPQAAAVAAPEEAKEPEAPPEQEEELDLPLEELGLSTRVLHSLKEEGIESVRALLALNLKDLKNIPGIGERSLEEIKEALEKKGFTLKE</sequence>
<name>RPOA_THETH</name>
<gene>
    <name type="primary">rpoA</name>
</gene>